<feature type="chain" id="PRO_0000069798" description="Melanocyte-stimulating hormone receptor">
    <location>
        <begin position="1"/>
        <end position="317"/>
    </location>
</feature>
<feature type="topological domain" description="Extracellular" evidence="2">
    <location>
        <begin position="1"/>
        <end position="37"/>
    </location>
</feature>
<feature type="transmembrane region" description="Helical; Name=1" evidence="2">
    <location>
        <begin position="38"/>
        <end position="63"/>
    </location>
</feature>
<feature type="topological domain" description="Cytoplasmic" evidence="2">
    <location>
        <begin position="64"/>
        <end position="72"/>
    </location>
</feature>
<feature type="transmembrane region" description="Helical; Name=2" evidence="2">
    <location>
        <begin position="73"/>
        <end position="93"/>
    </location>
</feature>
<feature type="topological domain" description="Extracellular" evidence="2">
    <location>
        <begin position="94"/>
        <end position="118"/>
    </location>
</feature>
<feature type="transmembrane region" description="Helical; Name=3" evidence="2">
    <location>
        <begin position="119"/>
        <end position="140"/>
    </location>
</feature>
<feature type="topological domain" description="Cytoplasmic" evidence="2">
    <location>
        <begin position="141"/>
        <end position="163"/>
    </location>
</feature>
<feature type="transmembrane region" description="Helical; Name=4" evidence="2">
    <location>
        <begin position="164"/>
        <end position="183"/>
    </location>
</feature>
<feature type="topological domain" description="Extracellular" evidence="2">
    <location>
        <begin position="184"/>
        <end position="191"/>
    </location>
</feature>
<feature type="transmembrane region" description="Helical; Name=5" evidence="2">
    <location>
        <begin position="192"/>
        <end position="211"/>
    </location>
</feature>
<feature type="topological domain" description="Cytoplasmic" evidence="2">
    <location>
        <begin position="212"/>
        <end position="240"/>
    </location>
</feature>
<feature type="transmembrane region" description="Helical; Name=6" evidence="2">
    <location>
        <begin position="241"/>
        <end position="266"/>
    </location>
</feature>
<feature type="topological domain" description="Extracellular" evidence="2">
    <location>
        <begin position="267"/>
        <end position="279"/>
    </location>
</feature>
<feature type="transmembrane region" description="Helical; Name=7" evidence="2">
    <location>
        <begin position="280"/>
        <end position="300"/>
    </location>
</feature>
<feature type="topological domain" description="Cytoplasmic" evidence="2">
    <location>
        <begin position="301"/>
        <end position="317"/>
    </location>
</feature>
<feature type="lipid moiety-binding region" description="S-palmitoyl cysteine" evidence="2">
    <location>
        <position position="315"/>
    </location>
</feature>
<feature type="glycosylation site" description="N-linked (GlcNAc...) asparagine" evidence="2">
    <location>
        <position position="15"/>
    </location>
</feature>
<feature type="glycosylation site" description="N-linked (GlcNAc...) asparagine" evidence="2">
    <location>
        <position position="29"/>
    </location>
</feature>
<feature type="sequence variant" description="In Labrador and Golden retriever with yellow coat color." evidence="4">
    <location>
        <begin position="306"/>
        <end position="317"/>
    </location>
</feature>
<proteinExistence type="inferred from homology"/>
<dbReference type="EMBL" id="AF064455">
    <property type="protein sequence ID" value="AAC33737.2"/>
    <property type="molecule type" value="Genomic_DNA"/>
</dbReference>
<dbReference type="SMR" id="O77616"/>
<dbReference type="FunCoup" id="O77616">
    <property type="interactions" value="76"/>
</dbReference>
<dbReference type="GlyCosmos" id="O77616">
    <property type="glycosylation" value="2 sites, No reported glycans"/>
</dbReference>
<dbReference type="InParanoid" id="O77616"/>
<dbReference type="Proteomes" id="UP000002254">
    <property type="component" value="Unplaced"/>
</dbReference>
<dbReference type="Proteomes" id="UP000694429">
    <property type="component" value="Unplaced"/>
</dbReference>
<dbReference type="Proteomes" id="UP000694542">
    <property type="component" value="Unplaced"/>
</dbReference>
<dbReference type="Proteomes" id="UP000805418">
    <property type="component" value="Unplaced"/>
</dbReference>
<dbReference type="GO" id="GO:0005737">
    <property type="term" value="C:cytoplasm"/>
    <property type="evidence" value="ECO:0000318"/>
    <property type="project" value="GO_Central"/>
</dbReference>
<dbReference type="GO" id="GO:0005886">
    <property type="term" value="C:plasma membrane"/>
    <property type="evidence" value="ECO:0000250"/>
    <property type="project" value="UniProtKB"/>
</dbReference>
<dbReference type="GO" id="GO:0004980">
    <property type="term" value="F:melanocyte-stimulating hormone receptor activity"/>
    <property type="evidence" value="ECO:0000318"/>
    <property type="project" value="GO_Central"/>
</dbReference>
<dbReference type="GO" id="GO:0007189">
    <property type="term" value="P:adenylate cyclase-activating G protein-coupled receptor signaling pathway"/>
    <property type="evidence" value="ECO:0000318"/>
    <property type="project" value="GO_Central"/>
</dbReference>
<dbReference type="GO" id="GO:0019222">
    <property type="term" value="P:regulation of metabolic process"/>
    <property type="evidence" value="ECO:0000318"/>
    <property type="project" value="GO_Central"/>
</dbReference>
<dbReference type="FunFam" id="1.20.1070.10:FF:000211">
    <property type="entry name" value="Melanocyte-stimulating hormone receptor"/>
    <property type="match status" value="1"/>
</dbReference>
<dbReference type="Gene3D" id="1.20.1070.10">
    <property type="entry name" value="Rhodopsin 7-helix transmembrane proteins"/>
    <property type="match status" value="1"/>
</dbReference>
<dbReference type="InterPro" id="IPR000276">
    <property type="entry name" value="GPCR_Rhodpsn"/>
</dbReference>
<dbReference type="InterPro" id="IPR017452">
    <property type="entry name" value="GPCR_Rhodpsn_7TM"/>
</dbReference>
<dbReference type="InterPro" id="IPR001671">
    <property type="entry name" value="Melcrt_ACTH_rcpt"/>
</dbReference>
<dbReference type="InterPro" id="IPR000761">
    <property type="entry name" value="MSH_rcpt"/>
</dbReference>
<dbReference type="PANTHER" id="PTHR22750">
    <property type="entry name" value="G-PROTEIN COUPLED RECEPTOR"/>
    <property type="match status" value="1"/>
</dbReference>
<dbReference type="Pfam" id="PF00001">
    <property type="entry name" value="7tm_1"/>
    <property type="match status" value="1"/>
</dbReference>
<dbReference type="PRINTS" id="PR00237">
    <property type="entry name" value="GPCRRHODOPSN"/>
</dbReference>
<dbReference type="PRINTS" id="PR00534">
    <property type="entry name" value="MCRFAMILY"/>
</dbReference>
<dbReference type="PRINTS" id="PR00536">
    <property type="entry name" value="MELNOCYTESHR"/>
</dbReference>
<dbReference type="SMART" id="SM01381">
    <property type="entry name" value="7TM_GPCR_Srsx"/>
    <property type="match status" value="1"/>
</dbReference>
<dbReference type="SUPFAM" id="SSF81321">
    <property type="entry name" value="Family A G protein-coupled receptor-like"/>
    <property type="match status" value="1"/>
</dbReference>
<dbReference type="PROSITE" id="PS00237">
    <property type="entry name" value="G_PROTEIN_RECEP_F1_1"/>
    <property type="match status" value="1"/>
</dbReference>
<dbReference type="PROSITE" id="PS50262">
    <property type="entry name" value="G_PROTEIN_RECEP_F1_2"/>
    <property type="match status" value="1"/>
</dbReference>
<gene>
    <name type="primary">MC1R</name>
</gene>
<reference key="1">
    <citation type="journal article" date="2000" name="Anim. Genet.">
        <title>Identification of a premature stop codon in the melanocyte-stimulating hormone receptor gene (MC1R) in Labrador and Golden retrievers with yellow coat colour.</title>
        <authorList>
            <person name="Everts R.E."/>
            <person name="Rothuizen J."/>
            <person name="van Oost B.A."/>
        </authorList>
    </citation>
    <scope>NUCLEOTIDE SEQUENCE [GENOMIC DNA]</scope>
    <scope>VARIANT 306-ARG--TRP-317 DEL</scope>
</reference>
<sequence length="317" mass="34984">MVWQGPQRRLLGSLNGTSPATPHFELAANQTGPRCLEVSIPNGLFLSLGLVSVVENVLVVAAIAKNRNLHSPMYYFIGCLAVSDLLVSVTNVLETAVMLLVEAGALAAQAAVVQQLDDIIDVLICGSMVSSLCFLGAIAVDRYLSIFYALRYHSIVTLPRAWRAISAIWVASVLSSTLFIAYYNHTAVLLCLVSFFVAMLVLMAVLYVHMLARARQHARGIARLRKRQHSVHQGFGLKGAATLTILLGIFFLCWGPFFLHLSLMVLCPQHPICGCVFQNFNLFLTLIICNSIIDPFIYAFRSQELRKTLQEVVLCSW</sequence>
<keyword id="KW-1003">Cell membrane</keyword>
<keyword id="KW-0297">G-protein coupled receptor</keyword>
<keyword id="KW-0325">Glycoprotein</keyword>
<keyword id="KW-0449">Lipoprotein</keyword>
<keyword id="KW-0472">Membrane</keyword>
<keyword id="KW-0564">Palmitate</keyword>
<keyword id="KW-0675">Receptor</keyword>
<keyword id="KW-1185">Reference proteome</keyword>
<keyword id="KW-0807">Transducer</keyword>
<keyword id="KW-0812">Transmembrane</keyword>
<keyword id="KW-1133">Transmembrane helix</keyword>
<evidence type="ECO:0000250" key="1">
    <source>
        <dbReference type="UniProtKB" id="Q01726"/>
    </source>
</evidence>
<evidence type="ECO:0000255" key="2"/>
<evidence type="ECO:0000255" key="3">
    <source>
        <dbReference type="PROSITE-ProRule" id="PRU00521"/>
    </source>
</evidence>
<evidence type="ECO:0000269" key="4">
    <source>
    </source>
</evidence>
<name>MSHR_CANLF</name>
<organism>
    <name type="scientific">Canis lupus familiaris</name>
    <name type="common">Dog</name>
    <name type="synonym">Canis familiaris</name>
    <dbReference type="NCBI Taxonomy" id="9615"/>
    <lineage>
        <taxon>Eukaryota</taxon>
        <taxon>Metazoa</taxon>
        <taxon>Chordata</taxon>
        <taxon>Craniata</taxon>
        <taxon>Vertebrata</taxon>
        <taxon>Euteleostomi</taxon>
        <taxon>Mammalia</taxon>
        <taxon>Eutheria</taxon>
        <taxon>Laurasiatheria</taxon>
        <taxon>Carnivora</taxon>
        <taxon>Caniformia</taxon>
        <taxon>Canidae</taxon>
        <taxon>Canis</taxon>
    </lineage>
</organism>
<protein>
    <recommendedName>
        <fullName>Melanocyte-stimulating hormone receptor</fullName>
        <shortName>MSH-R</shortName>
    </recommendedName>
    <alternativeName>
        <fullName>Melanocortin receptor 1</fullName>
        <shortName>MC1-R</shortName>
    </alternativeName>
</protein>
<comment type="function">
    <text evidence="1">Receptor for MSH (alpha, beta and gamma) and ACTH (By similarity). The activity of this receptor is mediated by G proteins which activate adenylate cyclase (By similarity). Mediates melanogenesis, the production of eumelanin (black/brown) and phaeomelanin (red/yellow), via regulation of cAMP signaling in melanocytes (By similarity).</text>
</comment>
<comment type="subunit">
    <text evidence="1">Interacts with MGRN1, but does not undergo MGRN1-mediated ubiquitination; this interaction competes with GNAS-binding and thus inhibits agonist-induced cAMP production. Interacts with OPN3; the interaction results in a decrease in MC1R-mediated cAMP signaling and ultimately a decrease in melanin production in melanocytes.</text>
</comment>
<comment type="subcellular location">
    <subcellularLocation>
        <location evidence="1">Cell membrane</location>
        <topology evidence="2">Multi-pass membrane protein</topology>
    </subcellularLocation>
</comment>
<comment type="similarity">
    <text evidence="3">Belongs to the G-protein coupled receptor 1 family.</text>
</comment>
<accession>O77616</accession>